<evidence type="ECO:0000255" key="1">
    <source>
        <dbReference type="HAMAP-Rule" id="MF_00036"/>
    </source>
</evidence>
<accession>Q48SS4</accession>
<comment type="function">
    <text evidence="1">Catalyzes the attachment of alanine to tRNA(Ala) in a two-step reaction: alanine is first activated by ATP to form Ala-AMP and then transferred to the acceptor end of tRNA(Ala). Also edits incorrectly charged Ser-tRNA(Ala) and Gly-tRNA(Ala) via its editing domain.</text>
</comment>
<comment type="catalytic activity">
    <reaction evidence="1">
        <text>tRNA(Ala) + L-alanine + ATP = L-alanyl-tRNA(Ala) + AMP + diphosphate</text>
        <dbReference type="Rhea" id="RHEA:12540"/>
        <dbReference type="Rhea" id="RHEA-COMP:9657"/>
        <dbReference type="Rhea" id="RHEA-COMP:9923"/>
        <dbReference type="ChEBI" id="CHEBI:30616"/>
        <dbReference type="ChEBI" id="CHEBI:33019"/>
        <dbReference type="ChEBI" id="CHEBI:57972"/>
        <dbReference type="ChEBI" id="CHEBI:78442"/>
        <dbReference type="ChEBI" id="CHEBI:78497"/>
        <dbReference type="ChEBI" id="CHEBI:456215"/>
        <dbReference type="EC" id="6.1.1.7"/>
    </reaction>
</comment>
<comment type="cofactor">
    <cofactor evidence="1">
        <name>Zn(2+)</name>
        <dbReference type="ChEBI" id="CHEBI:29105"/>
    </cofactor>
    <text evidence="1">Binds 1 zinc ion per subunit.</text>
</comment>
<comment type="subcellular location">
    <subcellularLocation>
        <location evidence="1">Cytoplasm</location>
    </subcellularLocation>
</comment>
<comment type="domain">
    <text evidence="1">Consists of three domains; the N-terminal catalytic domain, the editing domain and the C-terminal C-Ala domain. The editing domain removes incorrectly charged amino acids, while the C-Ala domain, along with tRNA(Ala), serves as a bridge to cooperatively bring together the editing and aminoacylation centers thus stimulating deacylation of misacylated tRNAs.</text>
</comment>
<comment type="similarity">
    <text evidence="1">Belongs to the class-II aminoacyl-tRNA synthetase family.</text>
</comment>
<organism>
    <name type="scientific">Streptococcus pyogenes serotype M28 (strain MGAS6180)</name>
    <dbReference type="NCBI Taxonomy" id="319701"/>
    <lineage>
        <taxon>Bacteria</taxon>
        <taxon>Bacillati</taxon>
        <taxon>Bacillota</taxon>
        <taxon>Bacilli</taxon>
        <taxon>Lactobacillales</taxon>
        <taxon>Streptococcaceae</taxon>
        <taxon>Streptococcus</taxon>
    </lineage>
</organism>
<name>SYA_STRPM</name>
<sequence>MKELSSAQIRQMWLDFWKSKGHCVEPSANLVPVNDPTLLWINSGVATLKKYFDGSVIPENPRITNAQKSIRTNDIENVGKTARHHTMFEMLGNFSIGDYFRDEAIEWGFELLTSPDWFDFPKDKLYMTYYPDDKDSYNRWIACGVEPSHLVPIEDNFWEIGAGPSGPDTEIFFDRGEDFDPENIGLRLLAEDIENDRYIEIWNIVLSQFNADPAVPRSEYKELPNKNIDTGAGLERLAAVMQGAKTNFETDLFMPIIREVEKLSGKTYNPDGDNMSFKVIADHIRALSFAIGDGALPGNEGRGYVLRRLLRRAVMHGRRLGINETFLYKLVPTVGQIMESYYPEVLEKRDFIEKIVKREEETFARTIDAGSGHLDSLLAQLKAEGKDTLEGKDIFKLYDTYGFPVELTEELAEDAGYKIDHEGFKSAMKEQQDRARAAVVKGGSMGMQNETLAGIVEESRFEYDTYSLESSLSVIIADNERTEAVSEGQALLVFAQTPFYAEMGGQVADTGRIKNDKGDTVAEVVDVQKAPNGQPLHTVNVLASLSVGTNYTLEINKERRLAVEKNHTATHLLHAALHNVIGEHATQAGSLNEEEFLRFDFTHFEAVSNEELRHIEQEVNEQIWNALTITTTETDVETAKEMGAMALFGEKYGKVVRVVQIGNYSVELCGGTHLNNSSEIGLFKIVKEEGIGSGTRRIIAVTGRQAFEAYRNQEDALKEIAATVKAPQLKDAAAKVQALSDSLRDLQKENAELKEKAAAAAAGDVFKDVQEAKGVRFIASQVDVADAGALRTFADNWKQKDYSDVLVLVAAIGEKVNVLVASKTKDVHAGNMIKELAPIVAGRGGGKPDMAMAGGSDASKIAELLAAVAETV</sequence>
<reference key="1">
    <citation type="journal article" date="2005" name="J. Infect. Dis.">
        <title>Genome sequence of a serotype M28 strain of group A Streptococcus: potential new insights into puerperal sepsis and bacterial disease specificity.</title>
        <authorList>
            <person name="Green N.M."/>
            <person name="Zhang S."/>
            <person name="Porcella S.F."/>
            <person name="Nagiec M.J."/>
            <person name="Barbian K.D."/>
            <person name="Beres S.B."/>
            <person name="Lefebvre R.B."/>
            <person name="Musser J.M."/>
        </authorList>
    </citation>
    <scope>NUCLEOTIDE SEQUENCE [LARGE SCALE GENOMIC DNA]</scope>
    <source>
        <strain>MGAS6180</strain>
    </source>
</reference>
<feature type="chain" id="PRO_0000075218" description="Alanine--tRNA ligase">
    <location>
        <begin position="1"/>
        <end position="872"/>
    </location>
</feature>
<feature type="binding site" evidence="1">
    <location>
        <position position="567"/>
    </location>
    <ligand>
        <name>Zn(2+)</name>
        <dbReference type="ChEBI" id="CHEBI:29105"/>
    </ligand>
</feature>
<feature type="binding site" evidence="1">
    <location>
        <position position="571"/>
    </location>
    <ligand>
        <name>Zn(2+)</name>
        <dbReference type="ChEBI" id="CHEBI:29105"/>
    </ligand>
</feature>
<feature type="binding site" evidence="1">
    <location>
        <position position="669"/>
    </location>
    <ligand>
        <name>Zn(2+)</name>
        <dbReference type="ChEBI" id="CHEBI:29105"/>
    </ligand>
</feature>
<feature type="binding site" evidence="1">
    <location>
        <position position="673"/>
    </location>
    <ligand>
        <name>Zn(2+)</name>
        <dbReference type="ChEBI" id="CHEBI:29105"/>
    </ligand>
</feature>
<gene>
    <name evidence="1" type="primary">alaS</name>
    <name type="ordered locus">M28_Spy1126</name>
</gene>
<protein>
    <recommendedName>
        <fullName evidence="1">Alanine--tRNA ligase</fullName>
        <ecNumber evidence="1">6.1.1.7</ecNumber>
    </recommendedName>
    <alternativeName>
        <fullName evidence="1">Alanyl-tRNA synthetase</fullName>
        <shortName evidence="1">AlaRS</shortName>
    </alternativeName>
</protein>
<dbReference type="EC" id="6.1.1.7" evidence="1"/>
<dbReference type="EMBL" id="CP000056">
    <property type="protein sequence ID" value="AAX72236.1"/>
    <property type="molecule type" value="Genomic_DNA"/>
</dbReference>
<dbReference type="RefSeq" id="WP_011284933.1">
    <property type="nucleotide sequence ID" value="NC_007296.2"/>
</dbReference>
<dbReference type="SMR" id="Q48SS4"/>
<dbReference type="KEGG" id="spb:M28_Spy1126"/>
<dbReference type="HOGENOM" id="CLU_004485_1_1_9"/>
<dbReference type="GO" id="GO:0005829">
    <property type="term" value="C:cytosol"/>
    <property type="evidence" value="ECO:0007669"/>
    <property type="project" value="TreeGrafter"/>
</dbReference>
<dbReference type="GO" id="GO:0004813">
    <property type="term" value="F:alanine-tRNA ligase activity"/>
    <property type="evidence" value="ECO:0007669"/>
    <property type="project" value="UniProtKB-UniRule"/>
</dbReference>
<dbReference type="GO" id="GO:0002161">
    <property type="term" value="F:aminoacyl-tRNA deacylase activity"/>
    <property type="evidence" value="ECO:0007669"/>
    <property type="project" value="TreeGrafter"/>
</dbReference>
<dbReference type="GO" id="GO:0005524">
    <property type="term" value="F:ATP binding"/>
    <property type="evidence" value="ECO:0007669"/>
    <property type="project" value="UniProtKB-UniRule"/>
</dbReference>
<dbReference type="GO" id="GO:0140096">
    <property type="term" value="F:catalytic activity, acting on a protein"/>
    <property type="evidence" value="ECO:0007669"/>
    <property type="project" value="UniProtKB-ARBA"/>
</dbReference>
<dbReference type="GO" id="GO:0016740">
    <property type="term" value="F:transferase activity"/>
    <property type="evidence" value="ECO:0007669"/>
    <property type="project" value="UniProtKB-ARBA"/>
</dbReference>
<dbReference type="GO" id="GO:0000049">
    <property type="term" value="F:tRNA binding"/>
    <property type="evidence" value="ECO:0007669"/>
    <property type="project" value="UniProtKB-KW"/>
</dbReference>
<dbReference type="GO" id="GO:0008270">
    <property type="term" value="F:zinc ion binding"/>
    <property type="evidence" value="ECO:0007669"/>
    <property type="project" value="UniProtKB-UniRule"/>
</dbReference>
<dbReference type="GO" id="GO:0006419">
    <property type="term" value="P:alanyl-tRNA aminoacylation"/>
    <property type="evidence" value="ECO:0007669"/>
    <property type="project" value="UniProtKB-UniRule"/>
</dbReference>
<dbReference type="CDD" id="cd00673">
    <property type="entry name" value="AlaRS_core"/>
    <property type="match status" value="1"/>
</dbReference>
<dbReference type="FunFam" id="3.10.310.40:FF:000001">
    <property type="entry name" value="Alanine--tRNA ligase"/>
    <property type="match status" value="1"/>
</dbReference>
<dbReference type="FunFam" id="3.30.54.20:FF:000001">
    <property type="entry name" value="Alanine--tRNA ligase"/>
    <property type="match status" value="1"/>
</dbReference>
<dbReference type="FunFam" id="3.30.930.10:FF:000046">
    <property type="entry name" value="Alanine--tRNA ligase"/>
    <property type="match status" value="1"/>
</dbReference>
<dbReference type="FunFam" id="3.30.980.10:FF:000004">
    <property type="entry name" value="Alanine--tRNA ligase, cytoplasmic"/>
    <property type="match status" value="1"/>
</dbReference>
<dbReference type="Gene3D" id="2.40.30.130">
    <property type="match status" value="1"/>
</dbReference>
<dbReference type="Gene3D" id="3.10.310.40">
    <property type="match status" value="1"/>
</dbReference>
<dbReference type="Gene3D" id="3.30.54.20">
    <property type="match status" value="1"/>
</dbReference>
<dbReference type="Gene3D" id="6.10.250.550">
    <property type="match status" value="1"/>
</dbReference>
<dbReference type="Gene3D" id="3.30.930.10">
    <property type="entry name" value="Bira Bifunctional Protein, Domain 2"/>
    <property type="match status" value="1"/>
</dbReference>
<dbReference type="Gene3D" id="3.30.980.10">
    <property type="entry name" value="Threonyl-trna Synthetase, Chain A, domain 2"/>
    <property type="match status" value="1"/>
</dbReference>
<dbReference type="HAMAP" id="MF_00036_B">
    <property type="entry name" value="Ala_tRNA_synth_B"/>
    <property type="match status" value="1"/>
</dbReference>
<dbReference type="InterPro" id="IPR045864">
    <property type="entry name" value="aa-tRNA-synth_II/BPL/LPL"/>
</dbReference>
<dbReference type="InterPro" id="IPR002318">
    <property type="entry name" value="Ala-tRNA-lgiase_IIc"/>
</dbReference>
<dbReference type="InterPro" id="IPR018162">
    <property type="entry name" value="Ala-tRNA-ligase_IIc_anticod-bd"/>
</dbReference>
<dbReference type="InterPro" id="IPR018165">
    <property type="entry name" value="Ala-tRNA-synth_IIc_core"/>
</dbReference>
<dbReference type="InterPro" id="IPR018164">
    <property type="entry name" value="Ala-tRNA-synth_IIc_N"/>
</dbReference>
<dbReference type="InterPro" id="IPR050058">
    <property type="entry name" value="Ala-tRNA_ligase"/>
</dbReference>
<dbReference type="InterPro" id="IPR023033">
    <property type="entry name" value="Ala_tRNA_ligase_euk/bac"/>
</dbReference>
<dbReference type="InterPro" id="IPR003156">
    <property type="entry name" value="DHHA1_dom"/>
</dbReference>
<dbReference type="InterPro" id="IPR018163">
    <property type="entry name" value="Thr/Ala-tRNA-synth_IIc_edit"/>
</dbReference>
<dbReference type="InterPro" id="IPR009000">
    <property type="entry name" value="Transl_B-barrel_sf"/>
</dbReference>
<dbReference type="InterPro" id="IPR012947">
    <property type="entry name" value="tRNA_SAD"/>
</dbReference>
<dbReference type="NCBIfam" id="TIGR00344">
    <property type="entry name" value="alaS"/>
    <property type="match status" value="1"/>
</dbReference>
<dbReference type="PANTHER" id="PTHR11777:SF9">
    <property type="entry name" value="ALANINE--TRNA LIGASE, CYTOPLASMIC"/>
    <property type="match status" value="1"/>
</dbReference>
<dbReference type="PANTHER" id="PTHR11777">
    <property type="entry name" value="ALANYL-TRNA SYNTHETASE"/>
    <property type="match status" value="1"/>
</dbReference>
<dbReference type="Pfam" id="PF02272">
    <property type="entry name" value="DHHA1"/>
    <property type="match status" value="1"/>
</dbReference>
<dbReference type="Pfam" id="PF01411">
    <property type="entry name" value="tRNA-synt_2c"/>
    <property type="match status" value="1"/>
</dbReference>
<dbReference type="Pfam" id="PF07973">
    <property type="entry name" value="tRNA_SAD"/>
    <property type="match status" value="1"/>
</dbReference>
<dbReference type="PRINTS" id="PR00980">
    <property type="entry name" value="TRNASYNTHALA"/>
</dbReference>
<dbReference type="SMART" id="SM00863">
    <property type="entry name" value="tRNA_SAD"/>
    <property type="match status" value="1"/>
</dbReference>
<dbReference type="SUPFAM" id="SSF55681">
    <property type="entry name" value="Class II aaRS and biotin synthetases"/>
    <property type="match status" value="1"/>
</dbReference>
<dbReference type="SUPFAM" id="SSF101353">
    <property type="entry name" value="Putative anticodon-binding domain of alanyl-tRNA synthetase (AlaRS)"/>
    <property type="match status" value="1"/>
</dbReference>
<dbReference type="SUPFAM" id="SSF55186">
    <property type="entry name" value="ThrRS/AlaRS common domain"/>
    <property type="match status" value="1"/>
</dbReference>
<dbReference type="SUPFAM" id="SSF50447">
    <property type="entry name" value="Translation proteins"/>
    <property type="match status" value="1"/>
</dbReference>
<dbReference type="PROSITE" id="PS50860">
    <property type="entry name" value="AA_TRNA_LIGASE_II_ALA"/>
    <property type="match status" value="1"/>
</dbReference>
<proteinExistence type="inferred from homology"/>
<keyword id="KW-0030">Aminoacyl-tRNA synthetase</keyword>
<keyword id="KW-0067">ATP-binding</keyword>
<keyword id="KW-0963">Cytoplasm</keyword>
<keyword id="KW-0436">Ligase</keyword>
<keyword id="KW-0479">Metal-binding</keyword>
<keyword id="KW-0547">Nucleotide-binding</keyword>
<keyword id="KW-0648">Protein biosynthesis</keyword>
<keyword id="KW-0694">RNA-binding</keyword>
<keyword id="KW-0820">tRNA-binding</keyword>
<keyword id="KW-0862">Zinc</keyword>